<organism>
    <name type="scientific">Malacoplasma penetrans (strain HF-2)</name>
    <name type="common">Mycoplasma penetrans</name>
    <dbReference type="NCBI Taxonomy" id="272633"/>
    <lineage>
        <taxon>Bacteria</taxon>
        <taxon>Bacillati</taxon>
        <taxon>Mycoplasmatota</taxon>
        <taxon>Mycoplasmoidales</taxon>
        <taxon>Mycoplasmoidaceae</taxon>
        <taxon>Malacoplasma</taxon>
    </lineage>
</organism>
<accession>Q8EVV1</accession>
<evidence type="ECO:0000255" key="1">
    <source>
        <dbReference type="HAMAP-Rule" id="MF_00140"/>
    </source>
</evidence>
<protein>
    <recommendedName>
        <fullName evidence="1">Tryptophan--tRNA ligase</fullName>
        <ecNumber evidence="1">6.1.1.2</ecNumber>
    </recommendedName>
    <alternativeName>
        <fullName evidence="1">Tryptophanyl-tRNA synthetase</fullName>
        <shortName evidence="1">TrpRS</shortName>
    </alternativeName>
</protein>
<gene>
    <name evidence="1" type="primary">trpS</name>
    <name type="ordered locus">MYPE4580</name>
</gene>
<sequence>MKTIVSGIQSTNSLTLGNYLGALKNFINLQNDNKMFIFIADMHSITVDFNPKELESNRKSVASIYAACGLDFDKNIIFYQSSVLAHTQLSYIITCHSYMGELSRMTQFKDKSQKTNANGTTNIPTGLFIYPCLMAADILLYDADLVPVGKDQKQHMELARDIAIRMNKKYKTNLFKIPEIYQSEMGAKIMDLVDPSIKMSKSNANTKGTIFLLDKVEDVRKKIMQAKTDSLNKVKYDVENQPGVSNLMTIYSCLTNKKTDEIEKEFENKNYGEFKTKVADAVCLLLEDIQKKYQIYFNSNEIEQKLEKNAKKCNEIVNKKINLVQQTLGLGTYKG</sequence>
<name>SYW_MALP2</name>
<reference key="1">
    <citation type="journal article" date="2002" name="Nucleic Acids Res.">
        <title>The complete genomic sequence of Mycoplasma penetrans, an intracellular bacterial pathogen in humans.</title>
        <authorList>
            <person name="Sasaki Y."/>
            <person name="Ishikawa J."/>
            <person name="Yamashita A."/>
            <person name="Oshima K."/>
            <person name="Kenri T."/>
            <person name="Furuya K."/>
            <person name="Yoshino C."/>
            <person name="Horino A."/>
            <person name="Shiba T."/>
            <person name="Sasaki T."/>
            <person name="Hattori M."/>
        </authorList>
    </citation>
    <scope>NUCLEOTIDE SEQUENCE [LARGE SCALE GENOMIC DNA]</scope>
    <source>
        <strain>HF-2</strain>
    </source>
</reference>
<comment type="function">
    <text evidence="1">Catalyzes the attachment of tryptophan to tRNA(Trp).</text>
</comment>
<comment type="catalytic activity">
    <reaction evidence="1">
        <text>tRNA(Trp) + L-tryptophan + ATP = L-tryptophyl-tRNA(Trp) + AMP + diphosphate + H(+)</text>
        <dbReference type="Rhea" id="RHEA:24080"/>
        <dbReference type="Rhea" id="RHEA-COMP:9671"/>
        <dbReference type="Rhea" id="RHEA-COMP:9705"/>
        <dbReference type="ChEBI" id="CHEBI:15378"/>
        <dbReference type="ChEBI" id="CHEBI:30616"/>
        <dbReference type="ChEBI" id="CHEBI:33019"/>
        <dbReference type="ChEBI" id="CHEBI:57912"/>
        <dbReference type="ChEBI" id="CHEBI:78442"/>
        <dbReference type="ChEBI" id="CHEBI:78535"/>
        <dbReference type="ChEBI" id="CHEBI:456215"/>
        <dbReference type="EC" id="6.1.1.2"/>
    </reaction>
</comment>
<comment type="subunit">
    <text evidence="1">Homodimer.</text>
</comment>
<comment type="subcellular location">
    <subcellularLocation>
        <location evidence="1">Cytoplasm</location>
    </subcellularLocation>
</comment>
<comment type="similarity">
    <text evidence="1">Belongs to the class-I aminoacyl-tRNA synthetase family.</text>
</comment>
<dbReference type="EC" id="6.1.1.2" evidence="1"/>
<dbReference type="EMBL" id="BA000026">
    <property type="protein sequence ID" value="BAC44248.1"/>
    <property type="molecule type" value="Genomic_DNA"/>
</dbReference>
<dbReference type="RefSeq" id="WP_011077282.1">
    <property type="nucleotide sequence ID" value="NC_004432.1"/>
</dbReference>
<dbReference type="SMR" id="Q8EVV1"/>
<dbReference type="FunCoup" id="Q8EVV1">
    <property type="interactions" value="214"/>
</dbReference>
<dbReference type="STRING" id="272633.gene:10731574"/>
<dbReference type="KEGG" id="mpe:MYPE4580"/>
<dbReference type="eggNOG" id="COG0180">
    <property type="taxonomic scope" value="Bacteria"/>
</dbReference>
<dbReference type="HOGENOM" id="CLU_029244_1_1_14"/>
<dbReference type="InParanoid" id="Q8EVV1"/>
<dbReference type="Proteomes" id="UP000002522">
    <property type="component" value="Chromosome"/>
</dbReference>
<dbReference type="GO" id="GO:0005829">
    <property type="term" value="C:cytosol"/>
    <property type="evidence" value="ECO:0007669"/>
    <property type="project" value="TreeGrafter"/>
</dbReference>
<dbReference type="GO" id="GO:0005524">
    <property type="term" value="F:ATP binding"/>
    <property type="evidence" value="ECO:0007669"/>
    <property type="project" value="UniProtKB-UniRule"/>
</dbReference>
<dbReference type="GO" id="GO:0004830">
    <property type="term" value="F:tryptophan-tRNA ligase activity"/>
    <property type="evidence" value="ECO:0007669"/>
    <property type="project" value="UniProtKB-UniRule"/>
</dbReference>
<dbReference type="GO" id="GO:0006436">
    <property type="term" value="P:tryptophanyl-tRNA aminoacylation"/>
    <property type="evidence" value="ECO:0007669"/>
    <property type="project" value="UniProtKB-UniRule"/>
</dbReference>
<dbReference type="CDD" id="cd00806">
    <property type="entry name" value="TrpRS_core"/>
    <property type="match status" value="1"/>
</dbReference>
<dbReference type="FunFam" id="1.10.240.10:FF:000002">
    <property type="entry name" value="Tryptophan--tRNA ligase"/>
    <property type="match status" value="1"/>
</dbReference>
<dbReference type="Gene3D" id="3.40.50.620">
    <property type="entry name" value="HUPs"/>
    <property type="match status" value="1"/>
</dbReference>
<dbReference type="Gene3D" id="1.10.240.10">
    <property type="entry name" value="Tyrosyl-Transfer RNA Synthetase"/>
    <property type="match status" value="1"/>
</dbReference>
<dbReference type="HAMAP" id="MF_00140_B">
    <property type="entry name" value="Trp_tRNA_synth_B"/>
    <property type="match status" value="1"/>
</dbReference>
<dbReference type="InterPro" id="IPR002305">
    <property type="entry name" value="aa-tRNA-synth_Ic"/>
</dbReference>
<dbReference type="InterPro" id="IPR014729">
    <property type="entry name" value="Rossmann-like_a/b/a_fold"/>
</dbReference>
<dbReference type="InterPro" id="IPR002306">
    <property type="entry name" value="Trp-tRNA-ligase"/>
</dbReference>
<dbReference type="InterPro" id="IPR024109">
    <property type="entry name" value="Trp-tRNA-ligase_bac-type"/>
</dbReference>
<dbReference type="InterPro" id="IPR050203">
    <property type="entry name" value="Trp-tRNA_synthetase"/>
</dbReference>
<dbReference type="NCBIfam" id="TIGR00233">
    <property type="entry name" value="trpS"/>
    <property type="match status" value="1"/>
</dbReference>
<dbReference type="PANTHER" id="PTHR43766">
    <property type="entry name" value="TRYPTOPHAN--TRNA LIGASE, MITOCHONDRIAL"/>
    <property type="match status" value="1"/>
</dbReference>
<dbReference type="PANTHER" id="PTHR43766:SF1">
    <property type="entry name" value="TRYPTOPHAN--TRNA LIGASE, MITOCHONDRIAL"/>
    <property type="match status" value="1"/>
</dbReference>
<dbReference type="Pfam" id="PF00579">
    <property type="entry name" value="tRNA-synt_1b"/>
    <property type="match status" value="1"/>
</dbReference>
<dbReference type="PRINTS" id="PR01039">
    <property type="entry name" value="TRNASYNTHTRP"/>
</dbReference>
<dbReference type="SUPFAM" id="SSF52374">
    <property type="entry name" value="Nucleotidylyl transferase"/>
    <property type="match status" value="1"/>
</dbReference>
<proteinExistence type="inferred from homology"/>
<keyword id="KW-0030">Aminoacyl-tRNA synthetase</keyword>
<keyword id="KW-0067">ATP-binding</keyword>
<keyword id="KW-0963">Cytoplasm</keyword>
<keyword id="KW-0436">Ligase</keyword>
<keyword id="KW-0547">Nucleotide-binding</keyword>
<keyword id="KW-0648">Protein biosynthesis</keyword>
<keyword id="KW-1185">Reference proteome</keyword>
<feature type="chain" id="PRO_0000136647" description="Tryptophan--tRNA ligase">
    <location>
        <begin position="1"/>
        <end position="335"/>
    </location>
</feature>
<feature type="short sequence motif" description="'HIGH' region" evidence="1">
    <location>
        <begin position="10"/>
        <end position="18"/>
    </location>
</feature>
<feature type="short sequence motif" description="'KMSKS' region" evidence="1">
    <location>
        <begin position="198"/>
        <end position="202"/>
    </location>
</feature>
<feature type="binding site" evidence="1">
    <location>
        <begin position="9"/>
        <end position="11"/>
    </location>
    <ligand>
        <name>ATP</name>
        <dbReference type="ChEBI" id="CHEBI:30616"/>
    </ligand>
</feature>
<feature type="binding site" evidence="1">
    <location>
        <begin position="17"/>
        <end position="18"/>
    </location>
    <ligand>
        <name>ATP</name>
        <dbReference type="ChEBI" id="CHEBI:30616"/>
    </ligand>
</feature>
<feature type="binding site" evidence="1">
    <location>
        <position position="137"/>
    </location>
    <ligand>
        <name>L-tryptophan</name>
        <dbReference type="ChEBI" id="CHEBI:57912"/>
    </ligand>
</feature>
<feature type="binding site" evidence="1">
    <location>
        <begin position="149"/>
        <end position="151"/>
    </location>
    <ligand>
        <name>ATP</name>
        <dbReference type="ChEBI" id="CHEBI:30616"/>
    </ligand>
</feature>
<feature type="binding site" evidence="1">
    <location>
        <position position="189"/>
    </location>
    <ligand>
        <name>ATP</name>
        <dbReference type="ChEBI" id="CHEBI:30616"/>
    </ligand>
</feature>
<feature type="binding site" evidence="1">
    <location>
        <begin position="198"/>
        <end position="202"/>
    </location>
    <ligand>
        <name>ATP</name>
        <dbReference type="ChEBI" id="CHEBI:30616"/>
    </ligand>
</feature>